<dbReference type="EMBL" id="CP001138">
    <property type="protein sequence ID" value="ACH49754.1"/>
    <property type="molecule type" value="Genomic_DNA"/>
</dbReference>
<dbReference type="RefSeq" id="WP_000692195.1">
    <property type="nucleotide sequence ID" value="NC_011149.1"/>
</dbReference>
<dbReference type="SMR" id="B5F756"/>
<dbReference type="KEGG" id="sea:SeAg_B0084"/>
<dbReference type="HOGENOM" id="CLU_060196_2_2_6"/>
<dbReference type="UniPathway" id="UPA00117"/>
<dbReference type="Proteomes" id="UP000008819">
    <property type="component" value="Chromosome"/>
</dbReference>
<dbReference type="GO" id="GO:0009055">
    <property type="term" value="F:electron transfer activity"/>
    <property type="evidence" value="ECO:0007669"/>
    <property type="project" value="InterPro"/>
</dbReference>
<dbReference type="GO" id="GO:0009437">
    <property type="term" value="P:carnitine metabolic process"/>
    <property type="evidence" value="ECO:0007669"/>
    <property type="project" value="UniProtKB-UniRule"/>
</dbReference>
<dbReference type="CDD" id="cd01714">
    <property type="entry name" value="ETF_beta"/>
    <property type="match status" value="1"/>
</dbReference>
<dbReference type="FunFam" id="3.40.50.620:FF:000072">
    <property type="entry name" value="Protein FixA homolog"/>
    <property type="match status" value="1"/>
</dbReference>
<dbReference type="Gene3D" id="3.40.50.620">
    <property type="entry name" value="HUPs"/>
    <property type="match status" value="1"/>
</dbReference>
<dbReference type="HAMAP" id="MF_01055">
    <property type="entry name" value="FixA"/>
    <property type="match status" value="1"/>
</dbReference>
<dbReference type="InterPro" id="IPR000049">
    <property type="entry name" value="ET-Flavoprotein_bsu_CS"/>
</dbReference>
<dbReference type="InterPro" id="IPR014730">
    <property type="entry name" value="ETF_a/b_N"/>
</dbReference>
<dbReference type="InterPro" id="IPR012255">
    <property type="entry name" value="ETF_b"/>
</dbReference>
<dbReference type="InterPro" id="IPR033948">
    <property type="entry name" value="ETF_beta_N"/>
</dbReference>
<dbReference type="InterPro" id="IPR023463">
    <property type="entry name" value="FixA"/>
</dbReference>
<dbReference type="InterPro" id="IPR014729">
    <property type="entry name" value="Rossmann-like_a/b/a_fold"/>
</dbReference>
<dbReference type="NCBIfam" id="NF002888">
    <property type="entry name" value="PRK03359.1"/>
    <property type="match status" value="1"/>
</dbReference>
<dbReference type="PANTHER" id="PTHR21294">
    <property type="entry name" value="ELECTRON TRANSFER FLAVOPROTEIN BETA-SUBUNIT"/>
    <property type="match status" value="1"/>
</dbReference>
<dbReference type="PANTHER" id="PTHR21294:SF17">
    <property type="entry name" value="PROTEIN FIXA"/>
    <property type="match status" value="1"/>
</dbReference>
<dbReference type="Pfam" id="PF01012">
    <property type="entry name" value="ETF"/>
    <property type="match status" value="1"/>
</dbReference>
<dbReference type="PIRSF" id="PIRSF000090">
    <property type="entry name" value="Beta-ETF"/>
    <property type="match status" value="1"/>
</dbReference>
<dbReference type="SMART" id="SM00893">
    <property type="entry name" value="ETF"/>
    <property type="match status" value="1"/>
</dbReference>
<dbReference type="SUPFAM" id="SSF52402">
    <property type="entry name" value="Adenine nucleotide alpha hydrolases-like"/>
    <property type="match status" value="1"/>
</dbReference>
<dbReference type="PROSITE" id="PS01065">
    <property type="entry name" value="ETF_BETA"/>
    <property type="match status" value="1"/>
</dbReference>
<proteinExistence type="inferred from homology"/>
<organism>
    <name type="scientific">Salmonella agona (strain SL483)</name>
    <dbReference type="NCBI Taxonomy" id="454166"/>
    <lineage>
        <taxon>Bacteria</taxon>
        <taxon>Pseudomonadati</taxon>
        <taxon>Pseudomonadota</taxon>
        <taxon>Gammaproteobacteria</taxon>
        <taxon>Enterobacterales</taxon>
        <taxon>Enterobacteriaceae</taxon>
        <taxon>Salmonella</taxon>
    </lineage>
</organism>
<sequence>MKIITCYKCVPDEQDIAINNADGTLDFSKADSKISQYDLNAIEAACQLKQQLGDAQVVAMSVGGKALTNAKGRKDVLSRGPDELIVVIDDQFEQALPQQTASALAAAAQKSGFDLLICGDGSSDLYAQQVGLLVGEALNIPAINGVSKILSLTDSTLTVERELEDEVETLSIPLPAVIAVSTDINTPQIPSMKAILGAAKKPVQVWSPADIGLNSVPAYSAQQVAAPKQRERQRVVIEGDGEEQIAAFVENLRKII</sequence>
<comment type="function">
    <text evidence="1">Required for anaerobic carnitine reduction. May bring reductant to CaiA.</text>
</comment>
<comment type="pathway">
    <text evidence="1">Amine and polyamine metabolism; carnitine metabolism.</text>
</comment>
<comment type="subunit">
    <text evidence="1">Heterodimer of FixA and FixB.</text>
</comment>
<comment type="similarity">
    <text evidence="1">Belongs to the ETF beta-subunit/FixA family.</text>
</comment>
<name>FIXA_SALA4</name>
<evidence type="ECO:0000255" key="1">
    <source>
        <dbReference type="HAMAP-Rule" id="MF_01055"/>
    </source>
</evidence>
<accession>B5F756</accession>
<keyword id="KW-0249">Electron transport</keyword>
<keyword id="KW-0813">Transport</keyword>
<reference key="1">
    <citation type="journal article" date="2011" name="J. Bacteriol.">
        <title>Comparative genomics of 28 Salmonella enterica isolates: evidence for CRISPR-mediated adaptive sublineage evolution.</title>
        <authorList>
            <person name="Fricke W.F."/>
            <person name="Mammel M.K."/>
            <person name="McDermott P.F."/>
            <person name="Tartera C."/>
            <person name="White D.G."/>
            <person name="Leclerc J.E."/>
            <person name="Ravel J."/>
            <person name="Cebula T.A."/>
        </authorList>
    </citation>
    <scope>NUCLEOTIDE SEQUENCE [LARGE SCALE GENOMIC DNA]</scope>
    <source>
        <strain>SL483</strain>
    </source>
</reference>
<feature type="chain" id="PRO_1000136322" description="Protein FixA">
    <location>
        <begin position="1"/>
        <end position="256"/>
    </location>
</feature>
<gene>
    <name evidence="1" type="primary">fixA</name>
    <name type="ordered locus">SeAg_B0084</name>
</gene>
<protein>
    <recommendedName>
        <fullName evidence="1">Protein FixA</fullName>
    </recommendedName>
</protein>